<gene>
    <name type="primary">Tesmin</name>
    <name type="synonym">Mtl5</name>
</gene>
<evidence type="ECO:0000250" key="1">
    <source>
        <dbReference type="UniProtKB" id="Q5XHX9"/>
    </source>
</evidence>
<evidence type="ECO:0000255" key="2">
    <source>
        <dbReference type="PROSITE-ProRule" id="PRU00971"/>
    </source>
</evidence>
<evidence type="ECO:0000269" key="3">
    <source>
    </source>
</evidence>
<evidence type="ECO:0000269" key="4">
    <source>
    </source>
</evidence>
<evidence type="ECO:0000269" key="5">
    <source>
    </source>
</evidence>
<evidence type="ECO:0000269" key="6">
    <source>
    </source>
</evidence>
<evidence type="ECO:0000269" key="7">
    <source>
    </source>
</evidence>
<evidence type="ECO:0000303" key="8">
    <source>
    </source>
</evidence>
<evidence type="ECO:0000303" key="9">
    <source>
    </source>
</evidence>
<evidence type="ECO:0000303" key="10">
    <source>
    </source>
</evidence>
<evidence type="ECO:0000305" key="11"/>
<evidence type="ECO:0007744" key="12">
    <source>
    </source>
</evidence>
<feature type="chain" id="PRO_0000096627" description="Tesmin">
    <location>
        <begin position="1"/>
        <end position="475"/>
    </location>
</feature>
<feature type="domain" description="CRC" evidence="2">
    <location>
        <begin position="263"/>
        <end position="372"/>
    </location>
</feature>
<feature type="modified residue" description="Phosphoserine" evidence="12">
    <location>
        <position position="34"/>
    </location>
</feature>
<feature type="modified residue" description="Phosphoserine" evidence="1">
    <location>
        <position position="67"/>
    </location>
</feature>
<feature type="splice variant" id="VSP_035300" description="In isoform 2." evidence="8 9">
    <location>
        <begin position="1"/>
        <end position="180"/>
    </location>
</feature>
<feature type="sequence conflict" description="In Ref. 3; BAB64934." evidence="11" ref="3">
    <original>Q</original>
    <variation>H</variation>
    <location>
        <position position="433"/>
    </location>
</feature>
<feature type="sequence conflict" description="In Ref. 3; BAB64934." evidence="11" ref="3">
    <original>Q</original>
    <variation>H</variation>
    <location>
        <position position="439"/>
    </location>
</feature>
<protein>
    <recommendedName>
        <fullName evidence="8">Tesmin</fullName>
    </recommendedName>
    <alternativeName>
        <fullName>Metallothionein-like 5, testis-specific</fullName>
    </alternativeName>
    <alternativeName>
        <fullName>Testis-specific metallothionein-like protein</fullName>
    </alternativeName>
</protein>
<sequence>MEDALLGAMTGPEDELGAELFGSERVFADGLALSPAGGAADRDELPVLADAYLGATEPGEPLLRALSPPPGAEVPAALLGDFPGLPELRSPDDAAPPPAYSVHVLSSLLPGARGPALLPLSAGVRVIPVEIKEAGGSVPGGSPEDAAFQAPLAQESCCKFPSSQEAEEASSCPRKKDSSPMVICQLKGGAQMLCIDNCGARELKALHLLPQYDDQSSFPQSELPKPMTTLVGRLLPVPAKLNLITQVDNGALPSAVNGAAFPSGPALQGPPKITLSGYCDCFSSGDFCNSCSCNNLRHELERFKAIKACLDRNPEAFQPKMGKGRLGAAKLRHSKGCNCKRSGCLKNYCECYEAKIMCSSICKCIACKNYEESPERKMLMSTPHYMEPGDFESSHYLSPAKFSGPPKLRKNRQAFSCISWEVVEATCACLLAQGEEAEQEHCSPSLAEQMILEEFGRCLSQILHIEFKSKGLKIE</sequence>
<keyword id="KW-0025">Alternative splicing</keyword>
<keyword id="KW-0963">Cytoplasm</keyword>
<keyword id="KW-0217">Developmental protein</keyword>
<keyword id="KW-0221">Differentiation</keyword>
<keyword id="KW-0469">Meiosis</keyword>
<keyword id="KW-0539">Nucleus</keyword>
<keyword id="KW-0597">Phosphoprotein</keyword>
<keyword id="KW-1185">Reference proteome</keyword>
<keyword id="KW-0744">Spermatogenesis</keyword>
<dbReference type="EMBL" id="U67176">
    <property type="protein sequence ID" value="AAD24666.1"/>
    <property type="molecule type" value="mRNA"/>
</dbReference>
<dbReference type="EMBL" id="U77383">
    <property type="protein sequence ID" value="AAD24667.1"/>
    <property type="status" value="ALT_INIT"/>
    <property type="molecule type" value="mRNA"/>
</dbReference>
<dbReference type="EMBL" id="AB057423">
    <property type="protein sequence ID" value="BAB64935.1"/>
    <property type="molecule type" value="mRNA"/>
</dbReference>
<dbReference type="EMBL" id="AB057422">
    <property type="protein sequence ID" value="BAB64934.1"/>
    <property type="molecule type" value="Genomic_DNA"/>
</dbReference>
<dbReference type="EMBL" id="AF329359">
    <property type="protein sequence ID" value="AAM54491.1"/>
    <property type="molecule type" value="mRNA"/>
</dbReference>
<dbReference type="EMBL" id="AF329360">
    <property type="protein sequence ID" value="AAM54492.1"/>
    <property type="molecule type" value="mRNA"/>
</dbReference>
<dbReference type="EMBL" id="BC024377">
    <property type="protein sequence ID" value="AAH24377.1"/>
    <property type="molecule type" value="mRNA"/>
</dbReference>
<dbReference type="CCDS" id="CCDS37880.1">
    <molecule id="Q9WTJ6-1"/>
</dbReference>
<dbReference type="CCDS" id="CCDS70912.1">
    <molecule id="Q9WTJ6-2"/>
</dbReference>
<dbReference type="RefSeq" id="NP_001034746.1">
    <molecule id="Q9WTJ6-1"/>
    <property type="nucleotide sequence ID" value="NM_001039657.2"/>
</dbReference>
<dbReference type="RefSeq" id="NP_001273486.1">
    <molecule id="Q9WTJ6-2"/>
    <property type="nucleotide sequence ID" value="NM_001286557.1"/>
</dbReference>
<dbReference type="RefSeq" id="NP_001273487.1">
    <molecule id="Q9WTJ6-2"/>
    <property type="nucleotide sequence ID" value="NM_001286558.1"/>
</dbReference>
<dbReference type="SMR" id="Q9WTJ6"/>
<dbReference type="FunCoup" id="Q9WTJ6">
    <property type="interactions" value="1198"/>
</dbReference>
<dbReference type="STRING" id="10090.ENSMUSP00000025840"/>
<dbReference type="iPTMnet" id="Q9WTJ6"/>
<dbReference type="PhosphoSitePlus" id="Q9WTJ6"/>
<dbReference type="SwissPalm" id="Q9WTJ6"/>
<dbReference type="PaxDb" id="10090-ENSMUSP00000025840"/>
<dbReference type="ProteomicsDB" id="291453">
    <molecule id="Q9WTJ6-1"/>
</dbReference>
<dbReference type="ProteomicsDB" id="291454">
    <molecule id="Q9WTJ6-2"/>
</dbReference>
<dbReference type="Antibodypedia" id="30600">
    <property type="antibodies" value="126 antibodies from 19 providers"/>
</dbReference>
<dbReference type="DNASU" id="17771"/>
<dbReference type="Ensembl" id="ENSMUST00000025840.16">
    <molecule id="Q9WTJ6-1"/>
    <property type="protein sequence ID" value="ENSMUSP00000025840.10"/>
    <property type="gene ID" value="ENSMUSG00000024905.16"/>
</dbReference>
<dbReference type="Ensembl" id="ENSMUST00000127142.2">
    <molecule id="Q9WTJ6-2"/>
    <property type="protein sequence ID" value="ENSMUSP00000122687.2"/>
    <property type="gene ID" value="ENSMUSG00000024905.16"/>
</dbReference>
<dbReference type="Ensembl" id="ENSMUST00000142193.8">
    <molecule id="Q9WTJ6-2"/>
    <property type="protein sequence ID" value="ENSMUSP00000114171.2"/>
    <property type="gene ID" value="ENSMUSG00000024905.16"/>
</dbReference>
<dbReference type="GeneID" id="17771"/>
<dbReference type="KEGG" id="mmu:17771"/>
<dbReference type="UCSC" id="uc008fwg.2">
    <molecule id="Q9WTJ6-1"/>
    <property type="organism name" value="mouse"/>
</dbReference>
<dbReference type="AGR" id="MGI:1340029"/>
<dbReference type="CTD" id="9633"/>
<dbReference type="MGI" id="MGI:1340029">
    <property type="gene designation" value="Tesmin"/>
</dbReference>
<dbReference type="VEuPathDB" id="HostDB:ENSMUSG00000024905"/>
<dbReference type="eggNOG" id="KOG1171">
    <property type="taxonomic scope" value="Eukaryota"/>
</dbReference>
<dbReference type="GeneTree" id="ENSGT00940000161379"/>
<dbReference type="HOGENOM" id="CLU_025199_0_0_1"/>
<dbReference type="InParanoid" id="Q9WTJ6"/>
<dbReference type="OMA" id="ILRIEFK"/>
<dbReference type="OrthoDB" id="6283463at2759"/>
<dbReference type="PhylomeDB" id="Q9WTJ6"/>
<dbReference type="TreeFam" id="TF313189"/>
<dbReference type="BioGRID-ORCS" id="17771">
    <property type="hits" value="2 hits in 78 CRISPR screens"/>
</dbReference>
<dbReference type="PRO" id="PR:Q9WTJ6"/>
<dbReference type="Proteomes" id="UP000000589">
    <property type="component" value="Chromosome 19"/>
</dbReference>
<dbReference type="RNAct" id="Q9WTJ6">
    <property type="molecule type" value="protein"/>
</dbReference>
<dbReference type="Bgee" id="ENSMUSG00000024905">
    <property type="expression patterns" value="Expressed in spermatocyte and 26 other cell types or tissues"/>
</dbReference>
<dbReference type="ExpressionAtlas" id="Q9WTJ6">
    <property type="expression patterns" value="baseline and differential"/>
</dbReference>
<dbReference type="GO" id="GO:0005737">
    <property type="term" value="C:cytoplasm"/>
    <property type="evidence" value="ECO:0000314"/>
    <property type="project" value="UniProtKB"/>
</dbReference>
<dbReference type="GO" id="GO:0001673">
    <property type="term" value="C:male germ cell nucleus"/>
    <property type="evidence" value="ECO:0000314"/>
    <property type="project" value="MGI"/>
</dbReference>
<dbReference type="GO" id="GO:0005634">
    <property type="term" value="C:nucleus"/>
    <property type="evidence" value="ECO:0000314"/>
    <property type="project" value="UniProtKB"/>
</dbReference>
<dbReference type="GO" id="GO:0030154">
    <property type="term" value="P:cell differentiation"/>
    <property type="evidence" value="ECO:0007669"/>
    <property type="project" value="UniProtKB-KW"/>
</dbReference>
<dbReference type="GO" id="GO:0007140">
    <property type="term" value="P:male meiotic nuclear division"/>
    <property type="evidence" value="ECO:0000315"/>
    <property type="project" value="UniProtKB"/>
</dbReference>
<dbReference type="GO" id="GO:0007283">
    <property type="term" value="P:spermatogenesis"/>
    <property type="evidence" value="ECO:0000315"/>
    <property type="project" value="UniProtKB"/>
</dbReference>
<dbReference type="InterPro" id="IPR005172">
    <property type="entry name" value="CRC"/>
</dbReference>
<dbReference type="InterPro" id="IPR028307">
    <property type="entry name" value="Lin-54_fam"/>
</dbReference>
<dbReference type="InterPro" id="IPR033467">
    <property type="entry name" value="Tesmin/TSO1-like_CXC"/>
</dbReference>
<dbReference type="PANTHER" id="PTHR12446:SF22">
    <property type="entry name" value="TESMIN"/>
    <property type="match status" value="1"/>
</dbReference>
<dbReference type="PANTHER" id="PTHR12446">
    <property type="entry name" value="TESMIN/TSO1-RELATED"/>
    <property type="match status" value="1"/>
</dbReference>
<dbReference type="Pfam" id="PF03638">
    <property type="entry name" value="TCR"/>
    <property type="match status" value="1"/>
</dbReference>
<dbReference type="SMART" id="SM01114">
    <property type="entry name" value="CXC"/>
    <property type="match status" value="1"/>
</dbReference>
<dbReference type="PROSITE" id="PS51634">
    <property type="entry name" value="CRC"/>
    <property type="match status" value="1"/>
</dbReference>
<proteinExistence type="evidence at protein level"/>
<reference key="1">
    <citation type="journal article" date="1999" name="Genomics">
        <title>A novel testis-specific metallothionein-like protein, tesmin, is an early marker of male germ cell differentiation.</title>
        <authorList>
            <person name="Sugihara T."/>
            <person name="Wadhwa R."/>
            <person name="Kaul S.C."/>
            <person name="Mitsui Y."/>
        </authorList>
    </citation>
    <scope>NUCLEOTIDE SEQUENCE [MRNA] (ISOFORM 2)</scope>
    <scope>NUCLEOTIDE SEQUENCE [MRNA] OF 91-475 (ISOFORM 1)</scope>
    <scope>TISSUE SPECIFICITY</scope>
    <scope>DEVELOPMENTAL STAGE</scope>
    <source>
        <strain>ICR</strain>
        <tissue>Testis</tissue>
    </source>
</reference>
<reference key="2">
    <citation type="journal article" date="2002" name="J. Inorg. Biochem.">
        <title>Germ cell-specific nucleocytoplasmic shuttling protein, tesmin, responsive to heavy metal stress in mouse testes.</title>
        <authorList>
            <person name="Matsuura T."/>
            <person name="Kawasaki Y."/>
            <person name="Miwa K."/>
            <person name="Sutou S."/>
            <person name="Ohinata Y."/>
            <person name="Yoshida F."/>
            <person name="Mitsui Y."/>
        </authorList>
    </citation>
    <scope>NUCLEOTIDE SEQUENCE [MRNA] (ISOFORM 1)</scope>
    <scope>SUBCELLULAR LOCATION</scope>
    <scope>DEVELOPMENTAL STAGE</scope>
    <source>
        <strain>BALB/cJ</strain>
    </source>
</reference>
<reference key="3">
    <citation type="journal article" date="2003" name="Biol. Reprod.">
        <title>Native tesmin is a 60-kilodalton protein that undergoes dynamic changes in its localization during spermatogenesis in mice.</title>
        <authorList>
            <person name="Sutou S."/>
            <person name="Miwa K."/>
            <person name="Matsuura T."/>
            <person name="Kawasaki Y."/>
            <person name="Ohinata Y."/>
            <person name="Mitsui Y."/>
        </authorList>
    </citation>
    <scope>NUCLEOTIDE SEQUENCE [GENOMIC DNA] (ISOFORM 1)</scope>
    <scope>SUBCELLULAR LOCATION</scope>
    <scope>TISSUE SPECIFICITY</scope>
    <source>
        <strain>129</strain>
    </source>
</reference>
<reference key="4">
    <citation type="journal article" date="2004" name="Mol. Reprod. Dev.">
        <title>Tesmin transcription is regulated differently during male and female meiosis.</title>
        <authorList>
            <person name="Olesen C."/>
            <person name="Moeller M."/>
            <person name="Byskov A.G."/>
        </authorList>
    </citation>
    <scope>NUCLEOTIDE SEQUENCE [MRNA] (ISOFORM 2)</scope>
    <scope>TISSUE SPECIFICITY</scope>
    <source>
        <strain>C57BL/6 X DBA/2</strain>
        <tissue>Testis</tissue>
    </source>
</reference>
<reference key="5">
    <citation type="journal article" date="2004" name="Genome Res.">
        <title>The status, quality, and expansion of the NIH full-length cDNA project: the Mammalian Gene Collection (MGC).</title>
        <authorList>
            <consortium name="The MGC Project Team"/>
        </authorList>
    </citation>
    <scope>NUCLEOTIDE SEQUENCE [LARGE SCALE MRNA] (ISOFORM 1)</scope>
    <source>
        <strain>FVB/N</strain>
        <tissue>Mammary tumor</tissue>
    </source>
</reference>
<reference key="6">
    <citation type="journal article" date="2010" name="Cell">
        <title>A tissue-specific atlas of mouse protein phosphorylation and expression.</title>
        <authorList>
            <person name="Huttlin E.L."/>
            <person name="Jedrychowski M.P."/>
            <person name="Elias J.E."/>
            <person name="Goswami T."/>
            <person name="Rad R."/>
            <person name="Beausoleil S.A."/>
            <person name="Villen J."/>
            <person name="Haas W."/>
            <person name="Sowa M.E."/>
            <person name="Gygi S.P."/>
        </authorList>
    </citation>
    <scope>PHOSPHORYLATION [LARGE SCALE ANALYSIS] AT SER-34</scope>
    <scope>IDENTIFICATION BY MASS SPECTROMETRY [LARGE SCALE ANALYSIS]</scope>
    <source>
        <tissue>Testis</tissue>
    </source>
</reference>
<reference key="7">
    <citation type="journal article" date="2020" name="Biol. Reprod.">
        <title>Tesmin, Metallothionein-Like 5, is Required for Spermatogenesis in Mice.</title>
        <authorList>
            <person name="Oji A."/>
            <person name="Isotani A."/>
            <person name="Fujihara Y."/>
            <person name="Castaneda J.M."/>
            <person name="Oura S."/>
            <person name="Ikawa M."/>
        </authorList>
    </citation>
    <scope>FUNCTION</scope>
    <scope>DISRUPTION PHENOTYPE</scope>
    <scope>SUBCELLULAR LOCATION (ISOFORMS 1 AND 2)</scope>
    <scope>TISSUE SPECIFICITY (ISOFORMS 1 AND 2)</scope>
</reference>
<comment type="function">
    <text evidence="7">Essential for normal spermatogenesis and male fertility (PubMed:31916570). Required for the completion of meiosis in male germ cells (PubMed:31916570).</text>
</comment>
<comment type="subcellular location">
    <subcellularLocation>
        <location evidence="4 5">Cytoplasm</location>
    </subcellularLocation>
    <subcellularLocation>
        <location evidence="4 5">Nucleus</location>
    </subcellularLocation>
    <text evidence="4 5">Predominantly localized to the cytoplasm (PubMed:11803038, PubMed:12606435). Translocates from the cytoplasm to the nucleus in the G2/M transition upon treatment with cadmium, cobalt or zinc (PubMed:11803038, PubMed:12606435).</text>
</comment>
<comment type="subcellular location">
    <molecule>Isoform 1</molecule>
    <subcellularLocation>
        <location evidence="7">Cytoplasm</location>
    </subcellularLocation>
</comment>
<comment type="subcellular location">
    <molecule>Isoform 2</molecule>
    <subcellularLocation>
        <location evidence="7">Nucleus</location>
    </subcellularLocation>
</comment>
<comment type="alternative products">
    <event type="alternative splicing"/>
    <isoform>
        <id>Q9WTJ6-1</id>
        <name>1</name>
        <name evidence="10">Long</name>
        <name evidence="10">Tesmin-L</name>
        <sequence type="displayed"/>
    </isoform>
    <isoform>
        <id>Q9WTJ6-2</id>
        <name>2</name>
        <name evidence="10">Short</name>
        <name evidence="10">Tesmin-S</name>
        <sequence type="described" ref="VSP_035300"/>
    </isoform>
</comment>
<comment type="tissue specificity">
    <text evidence="3 5 6">Expressed in spermatocytes and adult heart. Also expressed in fetal brain, heart, kidney and ovary.</text>
</comment>
<comment type="tissue specificity">
    <molecule>Isoform 1</molecule>
    <text evidence="7">Testis (at protein level).</text>
</comment>
<comment type="tissue specificity">
    <molecule>Isoform 2</molecule>
    <text evidence="7">Testis.</text>
</comment>
<comment type="developmental stage">
    <text evidence="3 4">Expressed as early as day 8, coincident with the entry of germ cells into meiosis. Expression then progressively increases. Expressed in the pachytene stage.</text>
</comment>
<comment type="disruption phenotype">
    <text evidence="7">Male mice are infertile due to arrested spermatogenesis at the pachytene stage.</text>
</comment>
<comment type="similarity">
    <text evidence="11">Belongs to the lin-54 family.</text>
</comment>
<comment type="sequence caution" evidence="11">
    <conflict type="erroneous initiation">
        <sequence resource="EMBL-CDS" id="AAD24667"/>
    </conflict>
</comment>
<accession>Q9WTJ6</accession>
<accession>Q548K4</accession>
<accession>Q8VIE0</accession>
<accession>Q8VIE1</accession>
<organism>
    <name type="scientific">Mus musculus</name>
    <name type="common">Mouse</name>
    <dbReference type="NCBI Taxonomy" id="10090"/>
    <lineage>
        <taxon>Eukaryota</taxon>
        <taxon>Metazoa</taxon>
        <taxon>Chordata</taxon>
        <taxon>Craniata</taxon>
        <taxon>Vertebrata</taxon>
        <taxon>Euteleostomi</taxon>
        <taxon>Mammalia</taxon>
        <taxon>Eutheria</taxon>
        <taxon>Euarchontoglires</taxon>
        <taxon>Glires</taxon>
        <taxon>Rodentia</taxon>
        <taxon>Myomorpha</taxon>
        <taxon>Muroidea</taxon>
        <taxon>Muridae</taxon>
        <taxon>Murinae</taxon>
        <taxon>Mus</taxon>
        <taxon>Mus</taxon>
    </lineage>
</organism>
<name>MTL5_MOUSE</name>